<organism>
    <name type="scientific">Staphylococcus carnosus (strain TM300)</name>
    <dbReference type="NCBI Taxonomy" id="396513"/>
    <lineage>
        <taxon>Bacteria</taxon>
        <taxon>Bacillati</taxon>
        <taxon>Bacillota</taxon>
        <taxon>Bacilli</taxon>
        <taxon>Bacillales</taxon>
        <taxon>Staphylococcaceae</taxon>
        <taxon>Staphylococcus</taxon>
    </lineage>
</organism>
<dbReference type="EC" id="2.7.1.-"/>
<dbReference type="EMBL" id="X93360">
    <property type="protein sequence ID" value="CAA63743.1"/>
    <property type="molecule type" value="Genomic_DNA"/>
</dbReference>
<dbReference type="EMBL" id="AM295250">
    <property type="protein sequence ID" value="CAL27908.1"/>
    <property type="molecule type" value="Genomic_DNA"/>
</dbReference>
<dbReference type="PIR" id="S63606">
    <property type="entry name" value="S46953"/>
</dbReference>
<dbReference type="SMR" id="Q53922"/>
<dbReference type="TCDB" id="4.A.1.1.14">
    <property type="family name" value="the pts glucose-glucoside (glc) family"/>
</dbReference>
<dbReference type="KEGG" id="sca:SCA_1000"/>
<dbReference type="eggNOG" id="COG1263">
    <property type="taxonomic scope" value="Bacteria"/>
</dbReference>
<dbReference type="eggNOG" id="COG1264">
    <property type="taxonomic scope" value="Bacteria"/>
</dbReference>
<dbReference type="eggNOG" id="COG2190">
    <property type="taxonomic scope" value="Bacteria"/>
</dbReference>
<dbReference type="HOGENOM" id="CLU_012312_1_1_9"/>
<dbReference type="OrthoDB" id="9764327at2"/>
<dbReference type="BioCyc" id="SCAR396513:SCA_RS05020-MONOMER"/>
<dbReference type="Proteomes" id="UP000000444">
    <property type="component" value="Chromosome"/>
</dbReference>
<dbReference type="GO" id="GO:0005886">
    <property type="term" value="C:plasma membrane"/>
    <property type="evidence" value="ECO:0007669"/>
    <property type="project" value="UniProtKB-SubCell"/>
</dbReference>
<dbReference type="GO" id="GO:0055056">
    <property type="term" value="F:D-glucose transmembrane transporter activity"/>
    <property type="evidence" value="ECO:0007669"/>
    <property type="project" value="InterPro"/>
</dbReference>
<dbReference type="GO" id="GO:0016301">
    <property type="term" value="F:kinase activity"/>
    <property type="evidence" value="ECO:0007669"/>
    <property type="project" value="UniProtKB-KW"/>
</dbReference>
<dbReference type="GO" id="GO:0008982">
    <property type="term" value="F:protein-N(PI)-phosphohistidine-sugar phosphotransferase activity"/>
    <property type="evidence" value="ECO:0007669"/>
    <property type="project" value="InterPro"/>
</dbReference>
<dbReference type="GO" id="GO:0090563">
    <property type="term" value="F:protein-phosphocysteine-sugar phosphotransferase activity"/>
    <property type="evidence" value="ECO:0007669"/>
    <property type="project" value="TreeGrafter"/>
</dbReference>
<dbReference type="GO" id="GO:1904659">
    <property type="term" value="P:D-glucose transmembrane transport"/>
    <property type="evidence" value="ECO:0007669"/>
    <property type="project" value="InterPro"/>
</dbReference>
<dbReference type="GO" id="GO:0009401">
    <property type="term" value="P:phosphoenolpyruvate-dependent sugar phosphotransferase system"/>
    <property type="evidence" value="ECO:0007669"/>
    <property type="project" value="UniProtKB-KW"/>
</dbReference>
<dbReference type="CDD" id="cd00212">
    <property type="entry name" value="PTS_IIB_glc"/>
    <property type="match status" value="1"/>
</dbReference>
<dbReference type="FunFam" id="2.70.70.10:FF:000001">
    <property type="entry name" value="PTS system glucose-specific IIA component"/>
    <property type="match status" value="1"/>
</dbReference>
<dbReference type="Gene3D" id="2.70.70.10">
    <property type="entry name" value="Glucose Permease (Domain IIA)"/>
    <property type="match status" value="1"/>
</dbReference>
<dbReference type="Gene3D" id="3.30.1360.60">
    <property type="entry name" value="Glucose permease domain IIB"/>
    <property type="match status" value="1"/>
</dbReference>
<dbReference type="InterPro" id="IPR011055">
    <property type="entry name" value="Dup_hybrid_motif"/>
</dbReference>
<dbReference type="InterPro" id="IPR036878">
    <property type="entry name" value="Glu_permease_IIB"/>
</dbReference>
<dbReference type="InterPro" id="IPR018113">
    <property type="entry name" value="PTrfase_EIIB_Cys"/>
</dbReference>
<dbReference type="InterPro" id="IPR001127">
    <property type="entry name" value="PTS_EIIA_1_perm"/>
</dbReference>
<dbReference type="InterPro" id="IPR003352">
    <property type="entry name" value="PTS_EIIC"/>
</dbReference>
<dbReference type="InterPro" id="IPR013013">
    <property type="entry name" value="PTS_EIIC_1"/>
</dbReference>
<dbReference type="InterPro" id="IPR050429">
    <property type="entry name" value="PTS_Glucose_EIICBA"/>
</dbReference>
<dbReference type="InterPro" id="IPR001996">
    <property type="entry name" value="PTS_IIB_1"/>
</dbReference>
<dbReference type="InterPro" id="IPR011299">
    <property type="entry name" value="PTS_IIBC_glc"/>
</dbReference>
<dbReference type="NCBIfam" id="TIGR00826">
    <property type="entry name" value="EIIB_glc"/>
    <property type="match status" value="1"/>
</dbReference>
<dbReference type="NCBIfam" id="TIGR00830">
    <property type="entry name" value="PTBA"/>
    <property type="match status" value="1"/>
</dbReference>
<dbReference type="NCBIfam" id="TIGR02002">
    <property type="entry name" value="PTS-II-BC-glcB"/>
    <property type="match status" value="1"/>
</dbReference>
<dbReference type="PANTHER" id="PTHR30009">
    <property type="entry name" value="CYTOCHROME C-TYPE SYNTHESIS PROTEIN AND PTS TRANSMEMBRANE COMPONENT"/>
    <property type="match status" value="1"/>
</dbReference>
<dbReference type="PANTHER" id="PTHR30009:SF20">
    <property type="entry name" value="PTS SYSTEM GLUCOSE-SPECIFIC EIICB COMPONENT-RELATED"/>
    <property type="match status" value="1"/>
</dbReference>
<dbReference type="Pfam" id="PF00358">
    <property type="entry name" value="PTS_EIIA_1"/>
    <property type="match status" value="1"/>
</dbReference>
<dbReference type="Pfam" id="PF00367">
    <property type="entry name" value="PTS_EIIB"/>
    <property type="match status" value="1"/>
</dbReference>
<dbReference type="Pfam" id="PF02378">
    <property type="entry name" value="PTS_EIIC"/>
    <property type="match status" value="1"/>
</dbReference>
<dbReference type="SUPFAM" id="SSF51261">
    <property type="entry name" value="Duplicated hybrid motif"/>
    <property type="match status" value="1"/>
</dbReference>
<dbReference type="SUPFAM" id="SSF55604">
    <property type="entry name" value="Glucose permease domain IIB"/>
    <property type="match status" value="1"/>
</dbReference>
<dbReference type="PROSITE" id="PS51093">
    <property type="entry name" value="PTS_EIIA_TYPE_1"/>
    <property type="match status" value="1"/>
</dbReference>
<dbReference type="PROSITE" id="PS00371">
    <property type="entry name" value="PTS_EIIA_TYPE_1_HIS"/>
    <property type="match status" value="1"/>
</dbReference>
<dbReference type="PROSITE" id="PS51098">
    <property type="entry name" value="PTS_EIIB_TYPE_1"/>
    <property type="match status" value="1"/>
</dbReference>
<dbReference type="PROSITE" id="PS01035">
    <property type="entry name" value="PTS_EIIB_TYPE_1_CYS"/>
    <property type="match status" value="1"/>
</dbReference>
<dbReference type="PROSITE" id="PS51103">
    <property type="entry name" value="PTS_EIIC_TYPE_1"/>
    <property type="match status" value="1"/>
</dbReference>
<sequence length="692" mass="75403">MKNLLKKFFGQLQRIGKALMLPVAILPAAGILLTFGNAMHNEQILHFAPWMQHHYIQLISQIMEASGQVIFDNLPLLFAMGTALGLAGGDGVAGIAALVGYLIMSATMGKIAGITIDDIFSYADGAKTLGQSAKDPAHALVLGIPTLQTGVFGGIIIGALAAWCYNKFYNIQLPQFLGFFAGKRFVPIITSLVAIVTGIVLSFVWPPVQDGLNNLSNFLLGKNLALTTFIFGIIERSLIPFGLHHIFYAPFWFEFGHYVNESGNLVRGDQRIWMAQYQDGVPFTAGAFTTGKYPFMMFGLPAAAFAIYRQAKPERRKVVGGLMLSAALTSFLTGITEPLEFSFLFVAPILYVAHVILAGTSFLIMHLLHVQIGMTFSGGFIDYILYGLLSWDRSNALLVIPVGIAYALIYYFLFTFLIKKLNLKTPGREDKEVESKDVSVSELPFEVLEAMGNKDNIKHLDACITRLRVEVRDKGLVDVEKLKQLGASGVLEVGNNMQAIFGPKSDQIKHDMQQIMDGKITSPAETTVTEDGDVETAEIVAEGGAVIYAPITGEAVDLSEVPDKVFSAKMMGDGIAIKPETGEVVAPFDGKVKMIFPTKHAIGLESKDGIELLIHFGLETVKLDGEGFEILVKENDNIVLGQPLMKVDLNYIKEHADDTITPIIITNAGSANIEVLHTGKVEQGEKLLLVNN</sequence>
<feature type="chain" id="PRO_0000351419" description="PTS system glucoside-specific EIICBA component">
    <location>
        <begin position="1"/>
        <end position="692"/>
    </location>
</feature>
<feature type="transmembrane region" description="Helical" evidence="3">
    <location>
        <begin position="15"/>
        <end position="35"/>
    </location>
</feature>
<feature type="transmembrane region" description="Helical" evidence="3">
    <location>
        <begin position="84"/>
        <end position="104"/>
    </location>
</feature>
<feature type="transmembrane region" description="Helical" evidence="3">
    <location>
        <begin position="140"/>
        <end position="160"/>
    </location>
</feature>
<feature type="transmembrane region" description="Helical" evidence="3">
    <location>
        <begin position="185"/>
        <end position="205"/>
    </location>
</feature>
<feature type="transmembrane region" description="Helical" evidence="3">
    <location>
        <begin position="215"/>
        <end position="235"/>
    </location>
</feature>
<feature type="transmembrane region" description="Helical" evidence="3">
    <location>
        <begin position="287"/>
        <end position="307"/>
    </location>
</feature>
<feature type="transmembrane region" description="Helical" evidence="3">
    <location>
        <begin position="318"/>
        <end position="338"/>
    </location>
</feature>
<feature type="transmembrane region" description="Helical" evidence="3">
    <location>
        <begin position="344"/>
        <end position="364"/>
    </location>
</feature>
<feature type="transmembrane region" description="Helical" evidence="3">
    <location>
        <begin position="370"/>
        <end position="390"/>
    </location>
</feature>
<feature type="transmembrane region" description="Helical" evidence="3">
    <location>
        <begin position="398"/>
        <end position="418"/>
    </location>
</feature>
<feature type="domain" description="PTS EIIC type-1" evidence="3">
    <location>
        <begin position="6"/>
        <end position="430"/>
    </location>
</feature>
<feature type="domain" description="PTS EIIB type-1" evidence="2">
    <location>
        <begin position="441"/>
        <end position="522"/>
    </location>
</feature>
<feature type="domain" description="PTS EIIA type-1" evidence="1">
    <location>
        <begin position="563"/>
        <end position="667"/>
    </location>
</feature>
<feature type="active site" description="Phosphocysteine intermediate; for EIIB activity" evidence="2">
    <location>
        <position position="463"/>
    </location>
</feature>
<feature type="active site" description="Tele-phosphohistidine intermediate; for EIIA activity" evidence="1">
    <location>
        <position position="615"/>
    </location>
</feature>
<feature type="sequence conflict" description="In Ref. 1; CAA63743." evidence="6" ref="1">
    <original>R</original>
    <variation>P</variation>
    <location>
        <position position="309"/>
    </location>
</feature>
<reference key="1">
    <citation type="journal article" date="1996" name="Mol. Gen. Genet.">
        <title>Cloning and sequencing of two genes from Staphylococcus carnosus coding for glucose-specific PTS and their expression in Escherichia coli K-12.</title>
        <authorList>
            <person name="Christiansen I."/>
            <person name="Hengstenberg W."/>
        </authorList>
    </citation>
    <scope>NUCLEOTIDE SEQUENCE [GENOMIC DNA]</scope>
</reference>
<reference key="2">
    <citation type="journal article" date="2009" name="Appl. Environ. Microbiol.">
        <title>Genome analysis of the meat starter culture bacterium Staphylococcus carnosus TM300.</title>
        <authorList>
            <person name="Rosenstein R."/>
            <person name="Nerz C."/>
            <person name="Biswas L."/>
            <person name="Resch A."/>
            <person name="Raddatz G."/>
            <person name="Schuster S.C."/>
            <person name="Goetz F."/>
        </authorList>
    </citation>
    <scope>NUCLEOTIDE SEQUENCE [LARGE SCALE GENOMIC DNA]</scope>
    <source>
        <strain>TM300</strain>
    </source>
</reference>
<reference key="3">
    <citation type="journal article" date="1999" name="Microbiology">
        <title>Staphylococcal phosphoenolpyruvate-dependent phosphotransferase system -- two highly similar glucose permeases in Staphylococcus carnosus with different glucoside specificity: protein engineering in vivo?</title>
        <authorList>
            <person name="Christiansen I."/>
            <person name="Hengstenberg W."/>
        </authorList>
    </citation>
    <scope>PROTEIN SEQUENCE OF N-TERMINUS</scope>
    <scope>FUNCTION</scope>
    <scope>SUBSTRATE SPECIFICITY</scope>
    <scope>ACTIVITY REGULATION</scope>
    <scope>SUBCELLULAR LOCATION</scope>
    <scope>BIOPHYSICOCHEMICAL PROPERTIES</scope>
</reference>
<reference key="4">
    <citation type="journal article" date="2000" name="Microbiology">
        <title>Regulation of the glucose-specific phosphotransferase system (PTS) of Staphylococcus carnosus by the antiterminator protein GlcT.</title>
        <authorList>
            <person name="Knezevic I."/>
            <person name="Bachem S."/>
            <person name="Sickmann A."/>
            <person name="Meyer H.E."/>
            <person name="Stuelke J."/>
            <person name="Hengstenberg W."/>
        </authorList>
    </citation>
    <scope>INDUCTION BY GLCT</scope>
</reference>
<name>PTU3C_STACT</name>
<keyword id="KW-1003">Cell membrane</keyword>
<keyword id="KW-0903">Direct protein sequencing</keyword>
<keyword id="KW-0418">Kinase</keyword>
<keyword id="KW-0472">Membrane</keyword>
<keyword id="KW-0598">Phosphotransferase system</keyword>
<keyword id="KW-1185">Reference proteome</keyword>
<keyword id="KW-0762">Sugar transport</keyword>
<keyword id="KW-0808">Transferase</keyword>
<keyword id="KW-0812">Transmembrane</keyword>
<keyword id="KW-1133">Transmembrane helix</keyword>
<keyword id="KW-0813">Transport</keyword>
<protein>
    <recommendedName>
        <fullName>PTS system glucoside-specific EIICBA component</fullName>
    </recommendedName>
    <alternativeName>
        <fullName>EIICBA-Glc 2</fullName>
    </alternativeName>
    <domain>
        <recommendedName>
            <fullName>Glucoside permease IIC component</fullName>
        </recommendedName>
        <alternativeName>
            <fullName>PTS system glucoside-specific EIIC component</fullName>
        </alternativeName>
    </domain>
    <domain>
        <recommendedName>
            <fullName>Glucoside-specific phosphotransferase enzyme IIB component</fullName>
            <ecNumber>2.7.1.-</ecNumber>
        </recommendedName>
        <alternativeName>
            <fullName>PTS system glucoside-specific EIIB component</fullName>
        </alternativeName>
    </domain>
    <domain>
        <recommendedName>
            <fullName>Glucoside-specific phosphotransferase enzyme IIA component</fullName>
        </recommendedName>
        <alternativeName>
            <fullName>PTS system glucoside-specific EIIA component</fullName>
        </alternativeName>
    </domain>
</protein>
<comment type="function">
    <text evidence="4">The phosphoenolpyruvate-dependent sugar phosphotransferase system (sugar PTS), a major carbohydrate active -transport system, catalyzes the phosphorylation of incoming sugar substrates concomitantly with their translocation across the cell membrane. This system is involved in alpha- and beta-glucoside transport. Can also transport glucose, but not galactose, fructose, mannose, cellobiose, sucrose, maltose, lactose, melibiose and trehalose, as well as N-acetylglucosamine.</text>
</comment>
<comment type="activity regulation">
    <text evidence="4">Inhibited by methyl alpha-D-glucoside, methyl beta-D-glucoside, p-nitrophenyl alpha-D-glucoside, o-nitrophenyl beta-D-glucoside and salicin, but not by 2-deoxyglucose.</text>
</comment>
<comment type="biophysicochemical properties">
    <kinetics>
        <KM evidence="4">19 uM for glucose</KM>
        <KM evidence="4">37.2 uM for glucose (in the presence of Triton X-100)</KM>
    </kinetics>
</comment>
<comment type="subcellular location">
    <subcellularLocation>
        <location evidence="3 4">Cell membrane</location>
        <topology evidence="3 4">Multi-pass membrane protein</topology>
    </subcellularLocation>
</comment>
<comment type="induction">
    <text evidence="5">Up-regulated by the antiterminator protein GlcT.</text>
</comment>
<comment type="domain">
    <text>The EIIC domain forms the PTS system translocation channel and contains the specific substrate-binding site.</text>
</comment>
<comment type="domain">
    <text>The EIIB domain is phosphorylated by phospho-EIIA on a cysteinyl or histidyl residue, depending on the transported sugar. Then, it transfers the phosphoryl group to the sugar substrate concomitantly with the sugar uptake processed by the EIIC domain.</text>
</comment>
<comment type="domain">
    <text>The EIIA domain is phosphorylated by phospho-HPr on a histidyl residue. Then, it transfers the phosphoryl group to the EIIB domain.</text>
</comment>
<proteinExistence type="evidence at protein level"/>
<gene>
    <name type="primary">glcB</name>
    <name type="ordered locus">Sca_1000</name>
</gene>
<evidence type="ECO:0000255" key="1">
    <source>
        <dbReference type="PROSITE-ProRule" id="PRU00416"/>
    </source>
</evidence>
<evidence type="ECO:0000255" key="2">
    <source>
        <dbReference type="PROSITE-ProRule" id="PRU00421"/>
    </source>
</evidence>
<evidence type="ECO:0000255" key="3">
    <source>
        <dbReference type="PROSITE-ProRule" id="PRU00426"/>
    </source>
</evidence>
<evidence type="ECO:0000269" key="4">
    <source>
    </source>
</evidence>
<evidence type="ECO:0000269" key="5">
    <source>
    </source>
</evidence>
<evidence type="ECO:0000305" key="6"/>
<accession>Q53922</accession>
<accession>B9DP63</accession>
<accession>Q53948</accession>